<feature type="peptide" id="PRO_0000015848" description="Insulin B chain">
    <location>
        <begin position="1"/>
        <end position="29"/>
    </location>
</feature>
<feature type="peptide" id="PRO_0000015849" description="Insulin A chain">
    <location>
        <begin position="30"/>
        <end position="51"/>
    </location>
</feature>
<feature type="disulfide bond" description="Interchain (between B and A chains)">
    <location>
        <begin position="7"/>
        <end position="36"/>
    </location>
</feature>
<feature type="disulfide bond" description="Interchain (between B and A chains)">
    <location>
        <begin position="19"/>
        <end position="49"/>
    </location>
</feature>
<feature type="disulfide bond">
    <location>
        <begin position="35"/>
        <end position="40"/>
    </location>
</feature>
<feature type="non-consecutive residues" evidence="1">
    <location>
        <begin position="29"/>
        <end position="30"/>
    </location>
</feature>
<evidence type="ECO:0000305" key="1"/>
<accession>P01330</accession>
<reference key="1">
    <citation type="journal article" date="1972" name="Diabetes 21 Suppl.">
        <title>Amino acid sequences of insulins.</title>
        <authorList>
            <person name="Smith L.F."/>
        </authorList>
    </citation>
    <scope>PROTEIN SEQUENCE</scope>
</reference>
<reference key="2">
    <citation type="journal article" date="1986" name="Biochem. J.">
        <title>Coypu insulin. Primary structure, conformation and biological properties of a hystricomorph rodent insulin.</title>
        <authorList>
            <person name="Bajaj M."/>
            <person name="Blundell T.L."/>
            <person name="Horuk R."/>
            <person name="Pitts J.E."/>
            <person name="Wood S.P."/>
            <person name="Gowan L.K."/>
            <person name="Schwabe C."/>
            <person name="Wollmer A."/>
            <person name="Gliemann J."/>
            <person name="Gammeltoft S."/>
        </authorList>
    </citation>
    <scope>PROTEIN SEQUENCE</scope>
</reference>
<protein>
    <recommendedName>
        <fullName>Insulin</fullName>
    </recommendedName>
    <component>
        <recommendedName>
            <fullName>Insulin B chain</fullName>
        </recommendedName>
    </component>
    <component>
        <recommendedName>
            <fullName>Insulin A chain</fullName>
        </recommendedName>
    </component>
</protein>
<name>INS_MYOCO</name>
<keyword id="KW-0119">Carbohydrate metabolism</keyword>
<keyword id="KW-0903">Direct protein sequencing</keyword>
<keyword id="KW-1015">Disulfide bond</keyword>
<keyword id="KW-0313">Glucose metabolism</keyword>
<keyword id="KW-0372">Hormone</keyword>
<keyword id="KW-0964">Secreted</keyword>
<gene>
    <name type="primary">INS</name>
</gene>
<organism>
    <name type="scientific">Myocastor coypus</name>
    <name type="common">Coypu</name>
    <name type="synonym">Mus coypus</name>
    <dbReference type="NCBI Taxonomy" id="10157"/>
    <lineage>
        <taxon>Eukaryota</taxon>
        <taxon>Metazoa</taxon>
        <taxon>Chordata</taxon>
        <taxon>Craniata</taxon>
        <taxon>Vertebrata</taxon>
        <taxon>Euteleostomi</taxon>
        <taxon>Mammalia</taxon>
        <taxon>Eutheria</taxon>
        <taxon>Euarchontoglires</taxon>
        <taxon>Glires</taxon>
        <taxon>Rodentia</taxon>
        <taxon>Hystricomorpha</taxon>
        <taxon>Myocastoridae</taxon>
        <taxon>Myocastor</taxon>
    </lineage>
</organism>
<proteinExistence type="evidence at protein level"/>
<sequence length="51" mass="5897">YVSQRLCGSQLVDTLYSVCRHRGFYRPNDGIVDQCCTNICSRNQLMSYCND</sequence>
<dbReference type="PIR" id="A01596">
    <property type="entry name" value="INCU"/>
</dbReference>
<dbReference type="SMR" id="P01330"/>
<dbReference type="GO" id="GO:0005576">
    <property type="term" value="C:extracellular region"/>
    <property type="evidence" value="ECO:0007669"/>
    <property type="project" value="UniProtKB-SubCell"/>
</dbReference>
<dbReference type="GO" id="GO:0005179">
    <property type="term" value="F:hormone activity"/>
    <property type="evidence" value="ECO:0007669"/>
    <property type="project" value="UniProtKB-KW"/>
</dbReference>
<dbReference type="GO" id="GO:0006006">
    <property type="term" value="P:glucose metabolic process"/>
    <property type="evidence" value="ECO:0007669"/>
    <property type="project" value="UniProtKB-KW"/>
</dbReference>
<dbReference type="CDD" id="cd04367">
    <property type="entry name" value="IlGF_insulin_like"/>
    <property type="match status" value="1"/>
</dbReference>
<dbReference type="Gene3D" id="1.10.100.10">
    <property type="entry name" value="Insulin-like"/>
    <property type="match status" value="1"/>
</dbReference>
<dbReference type="InterPro" id="IPR004825">
    <property type="entry name" value="Insulin"/>
</dbReference>
<dbReference type="InterPro" id="IPR016179">
    <property type="entry name" value="Insulin-like"/>
</dbReference>
<dbReference type="InterPro" id="IPR036438">
    <property type="entry name" value="Insulin-like_sf"/>
</dbReference>
<dbReference type="InterPro" id="IPR022353">
    <property type="entry name" value="Insulin_CS"/>
</dbReference>
<dbReference type="InterPro" id="IPR022352">
    <property type="entry name" value="Insulin_family"/>
</dbReference>
<dbReference type="Pfam" id="PF00049">
    <property type="entry name" value="Insulin"/>
    <property type="match status" value="2"/>
</dbReference>
<dbReference type="PRINTS" id="PR00276">
    <property type="entry name" value="INSULINFAMLY"/>
</dbReference>
<dbReference type="SMART" id="SM00078">
    <property type="entry name" value="IlGF"/>
    <property type="match status" value="1"/>
</dbReference>
<dbReference type="SUPFAM" id="SSF56994">
    <property type="entry name" value="Insulin-like"/>
    <property type="match status" value="1"/>
</dbReference>
<dbReference type="PROSITE" id="PS00262">
    <property type="entry name" value="INSULIN"/>
    <property type="match status" value="1"/>
</dbReference>
<comment type="function">
    <text>Insulin decreases blood glucose concentration. It increases cell permeability to monosaccharides, amino acids and fatty acids. It accelerates glycolysis, the pentose phosphate cycle, and glycogen synthesis in liver.</text>
</comment>
<comment type="subunit">
    <text>Heterodimer of a B chain and an A chain linked by two disulfide bonds.</text>
</comment>
<comment type="subcellular location">
    <subcellularLocation>
        <location>Secreted</location>
    </subcellularLocation>
</comment>
<comment type="similarity">
    <text evidence="1">Belongs to the insulin family.</text>
</comment>